<organism>
    <name type="scientific">Floropilus chiversii</name>
    <name type="common">Chaetomium chiversii</name>
    <dbReference type="NCBI Taxonomy" id="2587399"/>
    <lineage>
        <taxon>Eukaryota</taxon>
        <taxon>Fungi</taxon>
        <taxon>Dikarya</taxon>
        <taxon>Ascomycota</taxon>
        <taxon>Pezizomycotina</taxon>
        <taxon>Sordariomycetes</taxon>
        <taxon>Sordariomycetidae</taxon>
        <taxon>Sordariales</taxon>
        <taxon>Chaetomiaceae</taxon>
        <taxon>Floropilus</taxon>
    </lineage>
</organism>
<evidence type="ECO:0000250" key="1">
    <source>
        <dbReference type="UniProtKB" id="B3FWU0"/>
    </source>
</evidence>
<evidence type="ECO:0000255" key="2"/>
<evidence type="ECO:0000255" key="3">
    <source>
        <dbReference type="PROSITE-ProRule" id="PRU00258"/>
    </source>
</evidence>
<evidence type="ECO:0000255" key="4">
    <source>
        <dbReference type="PROSITE-ProRule" id="PRU00590"/>
    </source>
</evidence>
<evidence type="ECO:0000255" key="5">
    <source>
        <dbReference type="PROSITE-ProRule" id="PRU01348"/>
    </source>
</evidence>
<evidence type="ECO:0000255" key="6">
    <source>
        <dbReference type="PROSITE-ProRule" id="PRU01363"/>
    </source>
</evidence>
<evidence type="ECO:0000269" key="7">
    <source>
    </source>
</evidence>
<evidence type="ECO:0000303" key="8">
    <source>
    </source>
</evidence>
<evidence type="ECO:0000305" key="9">
    <source>
    </source>
</evidence>
<protein>
    <recommendedName>
        <fullName evidence="8">Reducing polyketide synthase rads1</fullName>
        <shortName evidence="8">R-PKS rads1</shortName>
        <ecNumber evidence="9">2.3.1.-</ecNumber>
    </recommendedName>
    <alternativeName>
        <fullName evidence="8">Radicicol biosynthesis cluster protein s1</fullName>
    </alternativeName>
</protein>
<feature type="chain" id="PRO_0000443054" description="Reducing polyketide synthase rads1">
    <location>
        <begin position="1"/>
        <end position="2431"/>
    </location>
</feature>
<feature type="domain" description="Ketosynthase family 3 (KS3)" evidence="5 9">
    <location>
        <begin position="10"/>
        <end position="440"/>
    </location>
</feature>
<feature type="domain" description="PKS/mFAS DH" evidence="6">
    <location>
        <begin position="944"/>
        <end position="1267"/>
    </location>
</feature>
<feature type="domain" description="Carrier" evidence="3 9">
    <location>
        <begin position="2346"/>
        <end position="2423"/>
    </location>
</feature>
<feature type="region of interest" description="Malonyl-CoA:ACP transacylase (MAT) domain" evidence="2 9">
    <location>
        <begin position="558"/>
        <end position="895"/>
    </location>
</feature>
<feature type="region of interest" description="N-terminal hotdog fold" evidence="6">
    <location>
        <begin position="944"/>
        <end position="1080"/>
    </location>
</feature>
<feature type="region of interest" description="Dehydratase (DH) domain" evidence="2 9">
    <location>
        <begin position="946"/>
        <end position="1264"/>
    </location>
</feature>
<feature type="region of interest" description="C-terminal hotdog fold" evidence="6">
    <location>
        <begin position="1108"/>
        <end position="1267"/>
    </location>
</feature>
<feature type="region of interest" description="Enoyl reductase (ER) domain" evidence="2 9">
    <location>
        <begin position="1705"/>
        <end position="2023"/>
    </location>
</feature>
<feature type="region of interest" description="Ketoreductase (KR) domain" evidence="2 9">
    <location>
        <begin position="2048"/>
        <end position="2228"/>
    </location>
</feature>
<feature type="active site" description="For beta-ketoacyl synthase activity" evidence="5">
    <location>
        <position position="184"/>
    </location>
</feature>
<feature type="active site" description="For beta-ketoacyl synthase activity" evidence="5">
    <location>
        <position position="319"/>
    </location>
</feature>
<feature type="active site" description="For beta-ketoacyl synthase activity" evidence="5">
    <location>
        <position position="363"/>
    </location>
</feature>
<feature type="active site" description="Proton acceptor; for dehydratase activity" evidence="6">
    <location>
        <position position="976"/>
    </location>
</feature>
<feature type="active site" description="Proton donor; for dehydratase activity" evidence="6">
    <location>
        <position position="1174"/>
    </location>
</feature>
<feature type="active site" description="Phosphocysteine intermediate" evidence="4">
    <location>
        <position position="1822"/>
    </location>
</feature>
<feature type="modified residue" description="O-(pantetheine 4'-phosphoryl)serine" evidence="3">
    <location>
        <position position="2383"/>
    </location>
</feature>
<reference key="1">
    <citation type="journal article" date="2008" name="Chem. Biol.">
        <title>Functional characterization of the biosynthesis of radicicol, an Hsp90 inhibitor resorcylic acid lactone from Chaetomium chiversii.</title>
        <authorList>
            <person name="Wang S."/>
            <person name="Xu Y."/>
            <person name="Maine E.A."/>
            <person name="Wijeratne E.M."/>
            <person name="Espinosa-Artiles P."/>
            <person name="Gunatilaka A.A."/>
            <person name="Molnar I."/>
        </authorList>
    </citation>
    <scope>NUCLEOTIDE SEQUENCE [GENOMIC DNA]</scope>
    <scope>FUNCTION</scope>
    <scope>DISRUPTION PHENOTYPE</scope>
    <scope>DOMAIN</scope>
    <source>
        <strain>CS-36-62</strain>
    </source>
</reference>
<dbReference type="EC" id="2.3.1.-" evidence="9"/>
<dbReference type="EMBL" id="EU980390">
    <property type="protein sequence ID" value="ACM42406.1"/>
    <property type="molecule type" value="Genomic_DNA"/>
</dbReference>
<dbReference type="SMR" id="C5H885"/>
<dbReference type="GO" id="GO:0004312">
    <property type="term" value="F:fatty acid synthase activity"/>
    <property type="evidence" value="ECO:0007669"/>
    <property type="project" value="TreeGrafter"/>
</dbReference>
<dbReference type="GO" id="GO:0016491">
    <property type="term" value="F:oxidoreductase activity"/>
    <property type="evidence" value="ECO:0007669"/>
    <property type="project" value="UniProtKB-KW"/>
</dbReference>
<dbReference type="GO" id="GO:0031177">
    <property type="term" value="F:phosphopantetheine binding"/>
    <property type="evidence" value="ECO:0007669"/>
    <property type="project" value="InterPro"/>
</dbReference>
<dbReference type="GO" id="GO:0008270">
    <property type="term" value="F:zinc ion binding"/>
    <property type="evidence" value="ECO:0007669"/>
    <property type="project" value="InterPro"/>
</dbReference>
<dbReference type="GO" id="GO:0006633">
    <property type="term" value="P:fatty acid biosynthetic process"/>
    <property type="evidence" value="ECO:0007669"/>
    <property type="project" value="TreeGrafter"/>
</dbReference>
<dbReference type="GO" id="GO:0044550">
    <property type="term" value="P:secondary metabolite biosynthetic process"/>
    <property type="evidence" value="ECO:0007669"/>
    <property type="project" value="UniProtKB-ARBA"/>
</dbReference>
<dbReference type="CDD" id="cd05195">
    <property type="entry name" value="enoyl_red"/>
    <property type="match status" value="1"/>
</dbReference>
<dbReference type="CDD" id="cd00833">
    <property type="entry name" value="PKS"/>
    <property type="match status" value="1"/>
</dbReference>
<dbReference type="FunFam" id="3.40.50.720:FF:000209">
    <property type="entry name" value="Polyketide synthase Pks12"/>
    <property type="match status" value="1"/>
</dbReference>
<dbReference type="Gene3D" id="3.40.47.10">
    <property type="match status" value="1"/>
</dbReference>
<dbReference type="Gene3D" id="1.10.1200.10">
    <property type="entry name" value="ACP-like"/>
    <property type="match status" value="1"/>
</dbReference>
<dbReference type="Gene3D" id="3.40.366.10">
    <property type="entry name" value="Malonyl-Coenzyme A Acyl Carrier Protein, domain 2"/>
    <property type="match status" value="1"/>
</dbReference>
<dbReference type="Gene3D" id="3.90.180.10">
    <property type="entry name" value="Medium-chain alcohol dehydrogenases, catalytic domain"/>
    <property type="match status" value="1"/>
</dbReference>
<dbReference type="Gene3D" id="3.40.50.720">
    <property type="entry name" value="NAD(P)-binding Rossmann-like Domain"/>
    <property type="match status" value="1"/>
</dbReference>
<dbReference type="Gene3D" id="3.10.129.110">
    <property type="entry name" value="Polyketide synthase dehydratase"/>
    <property type="match status" value="1"/>
</dbReference>
<dbReference type="InterPro" id="IPR001227">
    <property type="entry name" value="Ac_transferase_dom_sf"/>
</dbReference>
<dbReference type="InterPro" id="IPR036736">
    <property type="entry name" value="ACP-like_sf"/>
</dbReference>
<dbReference type="InterPro" id="IPR014043">
    <property type="entry name" value="Acyl_transferase_dom"/>
</dbReference>
<dbReference type="InterPro" id="IPR016035">
    <property type="entry name" value="Acyl_Trfase/lysoPLipase"/>
</dbReference>
<dbReference type="InterPro" id="IPR011032">
    <property type="entry name" value="GroES-like_sf"/>
</dbReference>
<dbReference type="InterPro" id="IPR014031">
    <property type="entry name" value="Ketoacyl_synth_C"/>
</dbReference>
<dbReference type="InterPro" id="IPR014030">
    <property type="entry name" value="Ketoacyl_synth_N"/>
</dbReference>
<dbReference type="InterPro" id="IPR016036">
    <property type="entry name" value="Malonyl_transacylase_ACP-bd"/>
</dbReference>
<dbReference type="InterPro" id="IPR036291">
    <property type="entry name" value="NAD(P)-bd_dom_sf"/>
</dbReference>
<dbReference type="InterPro" id="IPR032821">
    <property type="entry name" value="PKS_assoc"/>
</dbReference>
<dbReference type="InterPro" id="IPR020841">
    <property type="entry name" value="PKS_Beta-ketoAc_synthase_dom"/>
</dbReference>
<dbReference type="InterPro" id="IPR042104">
    <property type="entry name" value="PKS_dehydratase_sf"/>
</dbReference>
<dbReference type="InterPro" id="IPR020807">
    <property type="entry name" value="PKS_DH"/>
</dbReference>
<dbReference type="InterPro" id="IPR049551">
    <property type="entry name" value="PKS_DH_C"/>
</dbReference>
<dbReference type="InterPro" id="IPR049552">
    <property type="entry name" value="PKS_DH_N"/>
</dbReference>
<dbReference type="InterPro" id="IPR020843">
    <property type="entry name" value="PKS_ER"/>
</dbReference>
<dbReference type="InterPro" id="IPR013968">
    <property type="entry name" value="PKS_KR"/>
</dbReference>
<dbReference type="InterPro" id="IPR049900">
    <property type="entry name" value="PKS_mFAS_DH"/>
</dbReference>
<dbReference type="InterPro" id="IPR050091">
    <property type="entry name" value="PKS_NRPS_Biosynth_Enz"/>
</dbReference>
<dbReference type="InterPro" id="IPR020806">
    <property type="entry name" value="PKS_PP-bd"/>
</dbReference>
<dbReference type="InterPro" id="IPR009081">
    <property type="entry name" value="PP-bd_ACP"/>
</dbReference>
<dbReference type="InterPro" id="IPR006162">
    <property type="entry name" value="Ppantetheine_attach_site"/>
</dbReference>
<dbReference type="InterPro" id="IPR002364">
    <property type="entry name" value="Quin_OxRdtase/zeta-crystal_CS"/>
</dbReference>
<dbReference type="InterPro" id="IPR016039">
    <property type="entry name" value="Thiolase-like"/>
</dbReference>
<dbReference type="PANTHER" id="PTHR43775:SF29">
    <property type="entry name" value="ASPERFURANONE POLYKETIDE SYNTHASE AFOG-RELATED"/>
    <property type="match status" value="1"/>
</dbReference>
<dbReference type="PANTHER" id="PTHR43775">
    <property type="entry name" value="FATTY ACID SYNTHASE"/>
    <property type="match status" value="1"/>
</dbReference>
<dbReference type="Pfam" id="PF23297">
    <property type="entry name" value="ACP_SdgA_C"/>
    <property type="match status" value="1"/>
</dbReference>
<dbReference type="Pfam" id="PF00698">
    <property type="entry name" value="Acyl_transf_1"/>
    <property type="match status" value="1"/>
</dbReference>
<dbReference type="Pfam" id="PF13602">
    <property type="entry name" value="ADH_zinc_N_2"/>
    <property type="match status" value="1"/>
</dbReference>
<dbReference type="Pfam" id="PF16197">
    <property type="entry name" value="KAsynt_C_assoc"/>
    <property type="match status" value="1"/>
</dbReference>
<dbReference type="Pfam" id="PF00109">
    <property type="entry name" value="ketoacyl-synt"/>
    <property type="match status" value="1"/>
</dbReference>
<dbReference type="Pfam" id="PF02801">
    <property type="entry name" value="Ketoacyl-synt_C"/>
    <property type="match status" value="1"/>
</dbReference>
<dbReference type="Pfam" id="PF08659">
    <property type="entry name" value="KR"/>
    <property type="match status" value="1"/>
</dbReference>
<dbReference type="Pfam" id="PF21089">
    <property type="entry name" value="PKS_DH_N"/>
    <property type="match status" value="1"/>
</dbReference>
<dbReference type="Pfam" id="PF14765">
    <property type="entry name" value="PS-DH"/>
    <property type="match status" value="1"/>
</dbReference>
<dbReference type="SMART" id="SM00827">
    <property type="entry name" value="PKS_AT"/>
    <property type="match status" value="1"/>
</dbReference>
<dbReference type="SMART" id="SM00826">
    <property type="entry name" value="PKS_DH"/>
    <property type="match status" value="1"/>
</dbReference>
<dbReference type="SMART" id="SM00829">
    <property type="entry name" value="PKS_ER"/>
    <property type="match status" value="1"/>
</dbReference>
<dbReference type="SMART" id="SM00822">
    <property type="entry name" value="PKS_KR"/>
    <property type="match status" value="1"/>
</dbReference>
<dbReference type="SMART" id="SM00825">
    <property type="entry name" value="PKS_KS"/>
    <property type="match status" value="1"/>
</dbReference>
<dbReference type="SMART" id="SM00823">
    <property type="entry name" value="PKS_PP"/>
    <property type="match status" value="1"/>
</dbReference>
<dbReference type="SUPFAM" id="SSF47336">
    <property type="entry name" value="ACP-like"/>
    <property type="match status" value="1"/>
</dbReference>
<dbReference type="SUPFAM" id="SSF52151">
    <property type="entry name" value="FabD/lysophospholipase-like"/>
    <property type="match status" value="1"/>
</dbReference>
<dbReference type="SUPFAM" id="SSF50129">
    <property type="entry name" value="GroES-like"/>
    <property type="match status" value="1"/>
</dbReference>
<dbReference type="SUPFAM" id="SSF51735">
    <property type="entry name" value="NAD(P)-binding Rossmann-fold domains"/>
    <property type="match status" value="2"/>
</dbReference>
<dbReference type="SUPFAM" id="SSF55048">
    <property type="entry name" value="Probable ACP-binding domain of malonyl-CoA ACP transacylase"/>
    <property type="match status" value="1"/>
</dbReference>
<dbReference type="SUPFAM" id="SSF53901">
    <property type="entry name" value="Thiolase-like"/>
    <property type="match status" value="1"/>
</dbReference>
<dbReference type="PROSITE" id="PS50075">
    <property type="entry name" value="CARRIER"/>
    <property type="match status" value="1"/>
</dbReference>
<dbReference type="PROSITE" id="PS52004">
    <property type="entry name" value="KS3_2"/>
    <property type="match status" value="1"/>
</dbReference>
<dbReference type="PROSITE" id="PS00012">
    <property type="entry name" value="PHOSPHOPANTETHEINE"/>
    <property type="match status" value="1"/>
</dbReference>
<dbReference type="PROSITE" id="PS52019">
    <property type="entry name" value="PKS_MFAS_DH"/>
    <property type="match status" value="1"/>
</dbReference>
<dbReference type="PROSITE" id="PS01162">
    <property type="entry name" value="QOR_ZETA_CRYSTAL"/>
    <property type="match status" value="1"/>
</dbReference>
<sequence>MPSATGNGARAPIAIIGLACRFPGDASNPSKFWDLLKEGREAYSERTNRYNEDAFHYPGGDNRRQNVLPVKGGYMLKQDPYAWDAAFFNITAAEAIAFDPKQRIAMEVAYEAFENAGMTLQKVAGTQTACYIGTSMSDYRDSIVRDFGNYPKYHLLGTSDEMISNRISHFFDIHGPSATIETACSSSHVATHIACQSLQSGESEMALAGGVGMLLVPESTMQLNNLGFLSPFGQSRAFDETAGGYGRGEGCGMYVLKRLDKAIQDGDTIRAIIRGSGVNQDGWTQGVTMPSGDAQASLIKYVYESNGLDYGATQYVEAHGTGTQAGDPTEAAAIYRTIGQGGQKTNPWRKKLWIGSVKTNIGHLEAAAGAASVIKGVLAMEHGFIPPTIHFKKPNPAVKLEEWNLAVPTKLMPWPACQTRRMSTSAFGMGGTNAHIVLERPNDQALREMSNRSRPLVNGMGEGNNTKKRLFVFSSHDQAGFKRLADAFVEHLDRLGPAAASPEYLANLAYTIATARSGLSWRASCSAESAAELREQLLTTLGENATRASSGQQPRIGFVFTGQGAQWARMGIEMLERRVFGDSVARSAALLREMGCDWDPVTELARAQKEFRLGVPEISQPICTVLQIALVDELRSWGITPSKVVGHSSGEIAAAYCIGALSHSDALAAAYYRGKASAGIKQRQGGMMAVGCSPEAAKKLMTETSLRATVACVNSPSSVTLSGDVGTLEALRAVLEERGVFARRLKVEVAYHSPHMHSCSTEYTAAIQHLEARAAAAHDEEDDRQQRQSPIVMVSSVTGSEVDPEMLGPYYWVRNLISPVLFADAVKELVSPVGEEGNAVDMLVEIGPHSALQGPTEQTLSHHGIKNVRYLSMLTRGENALTTSLNLAAELFRRGVVVDVAKANDDTHCRLLTDLPPYPWNHSQTFRADSRIQRELVAQKFPTKSILGAELPSMDETERVWRGFIRLEEEPWLRDHTVGTTVLFPGAGVISMVLEAAQQMVEPGKTARAFTLRDISFMALMALTDGVATEVITHMRPHLMATTGSTPAAWWEFTVSSCTGVTGPLRNNCRGLISIAYEDTRSPHMIREDAGIEAARIADYHRILRECPETCSKERFYDRLAQSALRYGEIFRGVENCHPGNGKTAFEVKLTDIGETFTRGKLARPFLIHAAALDAVLQAWVGTTSNSNGPGSFGFDAPMLPKSISEMEISARIPAEVGYVMPGFSRSKRHGFNEWSADITMLDTGLSRVFLSIADFRLAELEVDDAAKPDRDTVDVDPAEIASEVHWNFALELLKPAEISRVVSSVGAETAHERLVELVRMAIHQRPAVDVIELVASAEELPDAVMSKLPQGIILPTQVRYGVVKGSADSTHAANIKEDILGRPFALGAPLAADTAPADLFVIPHRVSKNPKDLDTVWESLACLTKSDATILMVAAAAATTTDNGPISSTAPELVAAKGFELISCTPTSTDSLALYHYATKKNTQPERLTNGSVGERVVILEPYKSSTAIRTFSNELRELLEDQGYVVSTRTDIVGARADAGVGASLSAKTCVSLLELEQPVLDNLSEADFQSIRALILNCERLLWVTRGDSPSMRLVDGFARCIRNEIAGIKFQLLHLSSGEGPQHGPGLAARILLAPTADNEFREHDGLLQVSRIYRSLAENDQIRNHLHDSVRVASLPSGNFQDGKSMAGAPPLRLSIGRPGLLNTLHFVPEEESTALAPLADNEVELEVRASGINFRDIMGSMGLLAVTGIGQEASGVVVRTGRLGAEAASLKPGDRVSTLTAGGTHATRIRCDYRVAQRVPEAMSFEEAAGVPVTHCTAYYALVRLANLRRGQSVLVHAAAGGTGQAAVQLAKHMGLVVYATVGTDKKRRLMMEEYGIPEEHIFSSRDGSFVKGIKRITGGRGVDCVLNSLSGELLRLSFSCLATFGTFVEIGLRDITDNMRLDMRPFAKSTTFSFINMVTLLQQDPDTLGEILGEVFKLLREGILRPAQPVTVYPVGQVEEAFRTMQQGKHLGKMILSFTADHGRAPILYRAKDSLKLDPNATYLIVGGLGGLGRSLAMEFAASGARYIAFLSRSGDAKPEARAVIDQLAARGVQARVYRADVADEASFLQAMEDCTQQLPPIKGVVQMAMVLRDVVFEKMKYEEWATGLRPKVQGTWNLHQYFDHERPLDFMIFCSSIAGVFGNPSQAQYAAGNTYQDALASYHRARGLKAVSVNLGIMRDVGVIAEGDSHFMQTWEPVLGIREPAFRALMKSLINGQVQHEHHDGRWPCPPQVCVGLGTGDILATHNLARPAYFEDPRFGPLAVTSVTAAGSSSSGDGATVSLASRLSEVSTNKDPAVAAAIITEALVKTMADILRIPPSEVDPSRPMYRYGVDSLVALEVRNWITKEMKANMTLMEILAAVPMETFAVQIAKKSKLLVGLAA</sequence>
<keyword id="KW-0012">Acyltransferase</keyword>
<keyword id="KW-0511">Multifunctional enzyme</keyword>
<keyword id="KW-0521">NADP</keyword>
<keyword id="KW-0560">Oxidoreductase</keyword>
<keyword id="KW-0596">Phosphopantetheine</keyword>
<keyword id="KW-0597">Phosphoprotein</keyword>
<keyword id="KW-0808">Transferase</keyword>
<accession>C5H885</accession>
<proteinExistence type="inferred from homology"/>
<name>RADS1_FLOCH</name>
<gene>
    <name evidence="8" type="primary">rads1</name>
</gene>
<comment type="function">
    <text evidence="1 7">Reducing polyketide synthase; part of the gene cluster that mediates the biosynthesis of radicicol, a resorcylic acid lactone (RAL) that irreversibly inhibits the HSP90 molecular chaperone, an important target for cancer chemotherapy (PubMed:19101477). The cluster encodes only two apparent post-PKS enzymes, a cytochrome P450 monooxygenase (radP) and a non-heme halogenase (radH) that introduce the epoxide and the chlorine, respectively (PubMed:19101477). If this cluster includes all the genes required for radicicol biosynthesis, the remaining structural features of radicicol are presumably generated by the PKSs rads1 and rads2 (PubMed:19101477). The C-2' ketone could arise if the R-PKS rads1 and NR-PKS rads2 each carry out four iterations, in contrast to the five iteration-three iteration split for the hypothemycin PKSs (By similarity). The origin of the cis 5',6' double bond is not known (By similarity). The radicicol R-PKS radS1 ER domain may catalyze either double bond isomerization or reduction in the third iteration (By similarity).</text>
</comment>
<comment type="pathway">
    <text evidence="7">Secondary metabolite biosynthesis.</text>
</comment>
<comment type="disruption phenotype">
    <text evidence="7">Completely abolishes the production of radicicol (PubMed:19101477).</text>
</comment>
<comment type="biotechnology">
    <text evidence="9">Radicicol is an important pharmacophore as an inhibitor of heat shock protein 90 (Hsp90), an ATP-dependent chaperone involved in the post-translational maturation and stabilization of over one hundred proteins, and which activity has been implicated in diverse pathologies ranging from oncology to neurodegenerative and infectious diseases (PubMed:19101477).</text>
</comment>